<sequence length="548" mass="61036">MAYIPDGGAPTAGAIPLGSQCCVCKVELSVSGQNLLDRDVTSKSDPFCVLFIEDNGRWMEFDRTETAVNNLNPAFSKKFVLDYHFEEVQKLKFALFDQDKSSAQLDEHDFLGQFSCSLGTIVSSKKITRPLLLMNDKPAGKGVITIAAQELSDNRVITLSLAGRKLDKKDLFGKSDPFLEFYKPGDDGKWMLVHRTEVIKYTLDPVWKPFTVPLVSLCDGDLEKPIQVMCYDYDSNGGHDFIGEFQTSVLQMSEARDGVPLEIECINPKKQRKKKSYKNSGIIILRSCKIHRNYSFLDYILGGCQLMFTVGIDFTASNGNPLDPSSLHYINPMGTNEYLSAIWAVGQIIQDYDSDKMFPALGFGAQLPPDWKVSHEFAINFNPTNPFCSGVDGIAQAYSACLPHIRFYGPTNFSPIVNHVARFAAQATQQQTATQYFILLIITDGVISDMEETRHAVVQASKLPMSIIIVGVGNADFAAMEFLDGDNRRLRSHTGEEAARDIVQFVPFREFRNAAKETLAKAVLAELPQQVVQYFKHKNLPPTNSEPA</sequence>
<evidence type="ECO:0000250" key="1">
    <source>
        <dbReference type="UniProtKB" id="Q99829"/>
    </source>
</evidence>
<evidence type="ECO:0000255" key="2">
    <source>
        <dbReference type="PROSITE-ProRule" id="PRU00041"/>
    </source>
</evidence>
<evidence type="ECO:0000255" key="3">
    <source>
        <dbReference type="PROSITE-ProRule" id="PRU00219"/>
    </source>
</evidence>
<evidence type="ECO:0000269" key="4">
    <source>
    </source>
</evidence>
<evidence type="ECO:0000269" key="5">
    <source>
    </source>
</evidence>
<evidence type="ECO:0000305" key="6"/>
<evidence type="ECO:0000312" key="7">
    <source>
        <dbReference type="MGI" id="MGI:2387578"/>
    </source>
</evidence>
<protein>
    <recommendedName>
        <fullName evidence="6">Copine-2</fullName>
    </recommendedName>
    <alternativeName>
        <fullName evidence="1 7">Copine II</fullName>
    </alternativeName>
</protein>
<dbReference type="EMBL" id="BC022128">
    <property type="protein sequence ID" value="AAH22128.2"/>
    <property type="molecule type" value="mRNA"/>
</dbReference>
<dbReference type="EMBL" id="BC031801">
    <property type="protein sequence ID" value="AAH31801.1"/>
    <property type="molecule type" value="mRNA"/>
</dbReference>
<dbReference type="CCDS" id="CCDS22543.1"/>
<dbReference type="RefSeq" id="NP_705727.1">
    <property type="nucleotide sequence ID" value="NM_153507.2"/>
</dbReference>
<dbReference type="SMR" id="P59108"/>
<dbReference type="BioGRID" id="231541">
    <property type="interactions" value="3"/>
</dbReference>
<dbReference type="FunCoup" id="P59108">
    <property type="interactions" value="1483"/>
</dbReference>
<dbReference type="IntAct" id="P59108">
    <property type="interactions" value="2"/>
</dbReference>
<dbReference type="MINT" id="P59108"/>
<dbReference type="STRING" id="10090.ENSMUSP00000045755"/>
<dbReference type="GlyGen" id="P59108">
    <property type="glycosylation" value="1 site"/>
</dbReference>
<dbReference type="iPTMnet" id="P59108"/>
<dbReference type="PhosphoSitePlus" id="P59108"/>
<dbReference type="SwissPalm" id="P59108"/>
<dbReference type="jPOST" id="P59108"/>
<dbReference type="PaxDb" id="10090-ENSMUSP00000045755"/>
<dbReference type="PeptideAtlas" id="P59108"/>
<dbReference type="ProteomicsDB" id="285292"/>
<dbReference type="Pumba" id="P59108"/>
<dbReference type="Antibodypedia" id="63170">
    <property type="antibodies" value="53 antibodies from 17 providers"/>
</dbReference>
<dbReference type="DNASU" id="234577"/>
<dbReference type="Ensembl" id="ENSMUST00000048653.10">
    <property type="protein sequence ID" value="ENSMUSP00000045755.3"/>
    <property type="gene ID" value="ENSMUSG00000034361.11"/>
</dbReference>
<dbReference type="GeneID" id="234577"/>
<dbReference type="KEGG" id="mmu:234577"/>
<dbReference type="UCSC" id="uc009mwm.1">
    <property type="organism name" value="mouse"/>
</dbReference>
<dbReference type="AGR" id="MGI:2387578"/>
<dbReference type="CTD" id="221184"/>
<dbReference type="MGI" id="MGI:2387578">
    <property type="gene designation" value="Cpne2"/>
</dbReference>
<dbReference type="VEuPathDB" id="HostDB:ENSMUSG00000034361"/>
<dbReference type="eggNOG" id="KOG1327">
    <property type="taxonomic scope" value="Eukaryota"/>
</dbReference>
<dbReference type="GeneTree" id="ENSGT00940000157653"/>
<dbReference type="HOGENOM" id="CLU_020452_3_2_1"/>
<dbReference type="InParanoid" id="P59108"/>
<dbReference type="OMA" id="AHDSHSK"/>
<dbReference type="OrthoDB" id="5855668at2759"/>
<dbReference type="PhylomeDB" id="P59108"/>
<dbReference type="TreeFam" id="TF316419"/>
<dbReference type="BioGRID-ORCS" id="234577">
    <property type="hits" value="3 hits in 76 CRISPR screens"/>
</dbReference>
<dbReference type="ChiTaRS" id="Cpne2">
    <property type="organism name" value="mouse"/>
</dbReference>
<dbReference type="PRO" id="PR:P59108"/>
<dbReference type="Proteomes" id="UP000000589">
    <property type="component" value="Chromosome 8"/>
</dbReference>
<dbReference type="RNAct" id="P59108">
    <property type="molecule type" value="protein"/>
</dbReference>
<dbReference type="Bgee" id="ENSMUSG00000034361">
    <property type="expression patterns" value="Expressed in granulocyte and 159 other cell types or tissues"/>
</dbReference>
<dbReference type="ExpressionAtlas" id="P59108">
    <property type="expression patterns" value="baseline and differential"/>
</dbReference>
<dbReference type="GO" id="GO:0005737">
    <property type="term" value="C:cytoplasm"/>
    <property type="evidence" value="ECO:0000314"/>
    <property type="project" value="UniProtKB"/>
</dbReference>
<dbReference type="GO" id="GO:0005634">
    <property type="term" value="C:nucleus"/>
    <property type="evidence" value="ECO:0000314"/>
    <property type="project" value="UniProtKB"/>
</dbReference>
<dbReference type="GO" id="GO:0005886">
    <property type="term" value="C:plasma membrane"/>
    <property type="evidence" value="ECO:0000314"/>
    <property type="project" value="UniProtKB"/>
</dbReference>
<dbReference type="GO" id="GO:0005544">
    <property type="term" value="F:calcium-dependent phospholipid binding"/>
    <property type="evidence" value="ECO:0007669"/>
    <property type="project" value="InterPro"/>
</dbReference>
<dbReference type="GO" id="GO:0046872">
    <property type="term" value="F:metal ion binding"/>
    <property type="evidence" value="ECO:0007669"/>
    <property type="project" value="UniProtKB-KW"/>
</dbReference>
<dbReference type="GO" id="GO:0071277">
    <property type="term" value="P:cellular response to calcium ion"/>
    <property type="evidence" value="ECO:0000315"/>
    <property type="project" value="UniProtKB"/>
</dbReference>
<dbReference type="CDD" id="cd04048">
    <property type="entry name" value="C2A_Copine"/>
    <property type="match status" value="1"/>
</dbReference>
<dbReference type="CDD" id="cd04047">
    <property type="entry name" value="C2B_Copine"/>
    <property type="match status" value="1"/>
</dbReference>
<dbReference type="FunFam" id="2.60.40.150:FF:000103">
    <property type="entry name" value="Copine 2"/>
    <property type="match status" value="1"/>
</dbReference>
<dbReference type="FunFam" id="2.60.40.150:FF:000042">
    <property type="entry name" value="Copine 3"/>
    <property type="match status" value="1"/>
</dbReference>
<dbReference type="Gene3D" id="2.60.40.150">
    <property type="entry name" value="C2 domain"/>
    <property type="match status" value="2"/>
</dbReference>
<dbReference type="InterPro" id="IPR000008">
    <property type="entry name" value="C2_dom"/>
</dbReference>
<dbReference type="InterPro" id="IPR035892">
    <property type="entry name" value="C2_domain_sf"/>
</dbReference>
<dbReference type="InterPro" id="IPR037768">
    <property type="entry name" value="C2B_Copine"/>
</dbReference>
<dbReference type="InterPro" id="IPR045052">
    <property type="entry name" value="Copine"/>
</dbReference>
<dbReference type="InterPro" id="IPR010734">
    <property type="entry name" value="Copine_C"/>
</dbReference>
<dbReference type="InterPro" id="IPR002035">
    <property type="entry name" value="VWF_A"/>
</dbReference>
<dbReference type="InterPro" id="IPR036465">
    <property type="entry name" value="vWFA_dom_sf"/>
</dbReference>
<dbReference type="PANTHER" id="PTHR10857">
    <property type="entry name" value="COPINE"/>
    <property type="match status" value="1"/>
</dbReference>
<dbReference type="PANTHER" id="PTHR10857:SF3">
    <property type="entry name" value="COPINE-2"/>
    <property type="match status" value="1"/>
</dbReference>
<dbReference type="Pfam" id="PF00168">
    <property type="entry name" value="C2"/>
    <property type="match status" value="2"/>
</dbReference>
<dbReference type="Pfam" id="PF07002">
    <property type="entry name" value="Copine"/>
    <property type="match status" value="1"/>
</dbReference>
<dbReference type="SMART" id="SM00239">
    <property type="entry name" value="C2"/>
    <property type="match status" value="2"/>
</dbReference>
<dbReference type="SMART" id="SM00327">
    <property type="entry name" value="VWA"/>
    <property type="match status" value="1"/>
</dbReference>
<dbReference type="SUPFAM" id="SSF49562">
    <property type="entry name" value="C2 domain (Calcium/lipid-binding domain, CaLB)"/>
    <property type="match status" value="2"/>
</dbReference>
<dbReference type="SUPFAM" id="SSF53300">
    <property type="entry name" value="vWA-like"/>
    <property type="match status" value="1"/>
</dbReference>
<dbReference type="PROSITE" id="PS50004">
    <property type="entry name" value="C2"/>
    <property type="match status" value="2"/>
</dbReference>
<comment type="function">
    <text evidence="4 5">Calcium-dependent phospholipid-binding protein that plays a role in calcium-mediated intracellular processes. Exhibits calcium-dependent cell membrane binding properties (PubMed:21087455, PubMed:26175110).</text>
</comment>
<comment type="cofactor">
    <cofactor evidence="2">
        <name>Ca(2+)</name>
        <dbReference type="ChEBI" id="CHEBI:29108"/>
    </cofactor>
    <text evidence="2">Binds 3 Ca(2+) ions per C2 domain.</text>
</comment>
<comment type="subcellular location">
    <subcellularLocation>
        <location evidence="4 5">Cytoplasm</location>
    </subcellularLocation>
    <subcellularLocation>
        <location evidence="4 5">Nucleus</location>
    </subcellularLocation>
    <subcellularLocation>
        <location evidence="4 5">Cell membrane</location>
    </subcellularLocation>
    <text evidence="4 5">Translocates to the cell membrane and the nucleus in a calcium-dependent manner (PubMed:21087455, PubMed:26175110). Colocalizes with CD2 at the cell membrane (PubMed:21087455).</text>
</comment>
<comment type="domain">
    <text evidence="4 5">The C2 domain 2, but not the C2 domain 1, is necessary for calcium-mediated membrane association (PubMed:21087455, PubMed:26175110). The linker region is necessary for calcium-dependent cell membrane association (PubMed:21087455).</text>
</comment>
<comment type="similarity">
    <text evidence="6">Belongs to the copine family.</text>
</comment>
<name>CPNE2_MOUSE</name>
<feature type="chain" id="PRO_0000144837" description="Copine-2">
    <location>
        <begin position="1"/>
        <end position="548"/>
    </location>
</feature>
<feature type="domain" description="C2 1" evidence="2">
    <location>
        <begin position="6"/>
        <end position="131"/>
    </location>
</feature>
<feature type="domain" description="C2 2" evidence="2">
    <location>
        <begin position="138"/>
        <end position="263"/>
    </location>
</feature>
<feature type="domain" description="VWFA" evidence="3">
    <location>
        <begin position="305"/>
        <end position="507"/>
    </location>
</feature>
<feature type="region of interest" description="Linker region" evidence="4">
    <location>
        <begin position="247"/>
        <end position="304"/>
    </location>
</feature>
<feature type="binding site" evidence="2">
    <location>
        <position position="39"/>
    </location>
    <ligand>
        <name>Ca(2+)</name>
        <dbReference type="ChEBI" id="CHEBI:29108"/>
        <label>1</label>
    </ligand>
</feature>
<feature type="binding site" evidence="2">
    <location>
        <position position="39"/>
    </location>
    <ligand>
        <name>Ca(2+)</name>
        <dbReference type="ChEBI" id="CHEBI:29108"/>
        <label>2</label>
    </ligand>
</feature>
<feature type="binding site" evidence="2">
    <location>
        <position position="45"/>
    </location>
    <ligand>
        <name>Ca(2+)</name>
        <dbReference type="ChEBI" id="CHEBI:29108"/>
        <label>1</label>
    </ligand>
</feature>
<feature type="binding site" evidence="2">
    <location>
        <position position="97"/>
    </location>
    <ligand>
        <name>Ca(2+)</name>
        <dbReference type="ChEBI" id="CHEBI:29108"/>
        <label>1</label>
    </ligand>
</feature>
<feature type="binding site" evidence="2">
    <location>
        <position position="97"/>
    </location>
    <ligand>
        <name>Ca(2+)</name>
        <dbReference type="ChEBI" id="CHEBI:29108"/>
        <label>2</label>
    </ligand>
</feature>
<feature type="binding site" evidence="2">
    <location>
        <position position="99"/>
    </location>
    <ligand>
        <name>Ca(2+)</name>
        <dbReference type="ChEBI" id="CHEBI:29108"/>
        <label>1</label>
    </ligand>
</feature>
<feature type="binding site" evidence="2">
    <location>
        <position position="99"/>
    </location>
    <ligand>
        <name>Ca(2+)</name>
        <dbReference type="ChEBI" id="CHEBI:29108"/>
        <label>2</label>
    </ligand>
</feature>
<feature type="binding site" evidence="2">
    <location>
        <position position="99"/>
    </location>
    <ligand>
        <name>Ca(2+)</name>
        <dbReference type="ChEBI" id="CHEBI:29108"/>
        <label>3</label>
    </ligand>
</feature>
<feature type="binding site" evidence="2">
    <location>
        <position position="102"/>
    </location>
    <ligand>
        <name>Ca(2+)</name>
        <dbReference type="ChEBI" id="CHEBI:29108"/>
        <label>3</label>
    </ligand>
</feature>
<feature type="binding site" evidence="2">
    <location>
        <position position="109"/>
    </location>
    <ligand>
        <name>Ca(2+)</name>
        <dbReference type="ChEBI" id="CHEBI:29108"/>
        <label>2</label>
    </ligand>
</feature>
<feature type="binding site" evidence="2">
    <location>
        <position position="109"/>
    </location>
    <ligand>
        <name>Ca(2+)</name>
        <dbReference type="ChEBI" id="CHEBI:29108"/>
        <label>3</label>
    </ligand>
</feature>
<feature type="binding site" evidence="2">
    <location>
        <position position="170"/>
    </location>
    <ligand>
        <name>Ca(2+)</name>
        <dbReference type="ChEBI" id="CHEBI:29108"/>
        <label>4</label>
    </ligand>
</feature>
<feature type="binding site" evidence="2">
    <location>
        <position position="170"/>
    </location>
    <ligand>
        <name>Ca(2+)</name>
        <dbReference type="ChEBI" id="CHEBI:29108"/>
        <label>5</label>
    </ligand>
</feature>
<feature type="binding site" evidence="2">
    <location>
        <position position="176"/>
    </location>
    <ligand>
        <name>Ca(2+)</name>
        <dbReference type="ChEBI" id="CHEBI:29108"/>
        <label>4</label>
    </ligand>
</feature>
<feature type="binding site" evidence="2">
    <location>
        <position position="232"/>
    </location>
    <ligand>
        <name>Ca(2+)</name>
        <dbReference type="ChEBI" id="CHEBI:29108"/>
        <label>4</label>
    </ligand>
</feature>
<feature type="binding site" evidence="2">
    <location>
        <position position="232"/>
    </location>
    <ligand>
        <name>Ca(2+)</name>
        <dbReference type="ChEBI" id="CHEBI:29108"/>
        <label>5</label>
    </ligand>
</feature>
<feature type="binding site" evidence="2">
    <location>
        <position position="234"/>
    </location>
    <ligand>
        <name>Ca(2+)</name>
        <dbReference type="ChEBI" id="CHEBI:29108"/>
        <label>4</label>
    </ligand>
</feature>
<feature type="binding site" evidence="2">
    <location>
        <position position="234"/>
    </location>
    <ligand>
        <name>Ca(2+)</name>
        <dbReference type="ChEBI" id="CHEBI:29108"/>
        <label>5</label>
    </ligand>
</feature>
<feature type="binding site" evidence="2">
    <location>
        <position position="240"/>
    </location>
    <ligand>
        <name>Ca(2+)</name>
        <dbReference type="ChEBI" id="CHEBI:29108"/>
        <label>5</label>
    </ligand>
</feature>
<feature type="mutagenesis site" description="Does not inhibit calcium-dependent translocation to the cell membrane; when associated with N-39; N-97 and N-99." evidence="5">
    <original>D</original>
    <variation>N</variation>
    <location>
        <position position="37"/>
    </location>
</feature>
<feature type="mutagenesis site" description="Does not inhibit calcium-dependent translocation to the cell membrane; when associated with N-37; N-97 and N-99." evidence="5">
    <original>D</original>
    <variation>N</variation>
    <location>
        <position position="39"/>
    </location>
</feature>
<feature type="mutagenesis site" description="Does not inhibit calcium-dependent translocation to the cell membrane; when associated with N-37; N-39 and N-99." evidence="5">
    <original>D</original>
    <variation>N</variation>
    <location>
        <position position="97"/>
    </location>
</feature>
<feature type="mutagenesis site" description="Does not inhibit calcium-dependent translocation to the cell membrane; when associated with N-37; N-39 and N-97." evidence="5">
    <original>D</original>
    <variation>N</variation>
    <location>
        <position position="99"/>
    </location>
</feature>
<feature type="mutagenesis site" description="Leads to a reduction in the amount of calcium-dependent translocation to the cell membrane. Leads to the constitutive (calcium-independent) attachment to the cell membrane; when associated with N-176; N-232 and N-234." evidence="5">
    <original>D</original>
    <variation>N</variation>
    <location>
        <position position="170"/>
    </location>
</feature>
<feature type="mutagenesis site" description="Does not inhibit calcium-dependent translocation to the cell membrane. Leads to the constitutive (calcium-independent) attachment to the cell membrane; when associated with N-170; N-232 and N-234." evidence="5">
    <original>D</original>
    <variation>N</variation>
    <location>
        <position position="176"/>
    </location>
</feature>
<feature type="mutagenesis site" description="Leads to a reduction in the amount of calcium-dependent translocation to the cell membrane. Leads to the constitutive (calcium-independent) attachment to the cell membrane; when associated with N-170; N-176 and N-234." evidence="5">
    <original>D</original>
    <variation>N</variation>
    <location>
        <position position="232"/>
    </location>
</feature>
<feature type="mutagenesis site" description="Leads to a reduction in the amount of calcium-dependent translocation to the cell membrane. Leads to the constitutive (calcium-independent) attachment to the cell membrane; when associated with N-170; N-176 and N-232." evidence="5">
    <original>D</original>
    <variation>N</variation>
    <location>
        <position position="234"/>
    </location>
</feature>
<feature type="sequence conflict" description="In Ref. 1; AAH22128." evidence="6" ref="1">
    <location>
        <position position="435"/>
    </location>
</feature>
<keyword id="KW-0106">Calcium</keyword>
<keyword id="KW-1003">Cell membrane</keyword>
<keyword id="KW-0963">Cytoplasm</keyword>
<keyword id="KW-0472">Membrane</keyword>
<keyword id="KW-0479">Metal-binding</keyword>
<keyword id="KW-0539">Nucleus</keyword>
<keyword id="KW-1185">Reference proteome</keyword>
<keyword id="KW-0677">Repeat</keyword>
<proteinExistence type="evidence at protein level"/>
<reference key="1">
    <citation type="journal article" date="2004" name="Genome Res.">
        <title>The status, quality, and expansion of the NIH full-length cDNA project: the Mammalian Gene Collection (MGC).</title>
        <authorList>
            <consortium name="The MGC Project Team"/>
        </authorList>
    </citation>
    <scope>NUCLEOTIDE SEQUENCE [LARGE SCALE MRNA]</scope>
    <source>
        <strain>C57BL/6J</strain>
        <strain>FVB/N</strain>
        <tissue>Liver</tissue>
        <tissue>Mammary tumor</tissue>
    </source>
</reference>
<reference key="2">
    <citation type="journal article" date="2010" name="Cell">
        <title>A tissue-specific atlas of mouse protein phosphorylation and expression.</title>
        <authorList>
            <person name="Huttlin E.L."/>
            <person name="Jedrychowski M.P."/>
            <person name="Elias J.E."/>
            <person name="Goswami T."/>
            <person name="Rad R."/>
            <person name="Beausoleil S.A."/>
            <person name="Villen J."/>
            <person name="Haas W."/>
            <person name="Sowa M.E."/>
            <person name="Gygi S.P."/>
        </authorList>
    </citation>
    <scope>IDENTIFICATION BY MASS SPECTROMETRY [LARGE SCALE ANALYSIS]</scope>
    <source>
        <tissue>Brain</tissue>
        <tissue>Kidney</tissue>
        <tissue>Spleen</tissue>
    </source>
</reference>
<reference key="3">
    <citation type="journal article" date="2010" name="FEBS J.">
        <title>Copines-1, -2, -3, -6 and -7 show different calcium-dependent intracellular membrane translocation and targeting.</title>
        <authorList>
            <person name="Perestenko P.V."/>
            <person name="Pooler A.M."/>
            <person name="Noorbakhshnia M."/>
            <person name="Gray A."/>
            <person name="Bauccio C."/>
            <person name="Jeffrey McIlhinney R.A."/>
        </authorList>
    </citation>
    <scope>FUNCTION</scope>
    <scope>SUBCELLULAR LOCATION</scope>
    <scope>DOMAIN</scope>
</reference>
<reference key="4">
    <citation type="journal article" date="2015" name="FEBS J.">
        <title>The second C2-domain of copines -2, -6 and -7 is responsible for their calcium-dependent membrane association.</title>
        <authorList>
            <person name="Perestenko P."/>
            <person name="Watanabe M."/>
            <person name="Beusnard-Bee T."/>
            <person name="Guna P."/>
            <person name="McIlhinney J."/>
        </authorList>
    </citation>
    <scope>FUNCTION</scope>
    <scope>SUBCELLULAR LOCATION</scope>
    <scope>DOMAIN</scope>
    <scope>MUTAGENESIS OF ASP-37; ASP-39; ASP-97; ASP-99; ASP-170; ASP-176; ASP-232 AND ASP-234</scope>
</reference>
<gene>
    <name evidence="7" type="primary">Cpne2</name>
</gene>
<organism>
    <name type="scientific">Mus musculus</name>
    <name type="common">Mouse</name>
    <dbReference type="NCBI Taxonomy" id="10090"/>
    <lineage>
        <taxon>Eukaryota</taxon>
        <taxon>Metazoa</taxon>
        <taxon>Chordata</taxon>
        <taxon>Craniata</taxon>
        <taxon>Vertebrata</taxon>
        <taxon>Euteleostomi</taxon>
        <taxon>Mammalia</taxon>
        <taxon>Eutheria</taxon>
        <taxon>Euarchontoglires</taxon>
        <taxon>Glires</taxon>
        <taxon>Rodentia</taxon>
        <taxon>Myomorpha</taxon>
        <taxon>Muroidea</taxon>
        <taxon>Muridae</taxon>
        <taxon>Murinae</taxon>
        <taxon>Mus</taxon>
        <taxon>Mus</taxon>
    </lineage>
</organism>
<accession>P59108</accession>
<accession>Q8K1D7</accession>